<proteinExistence type="inferred from homology"/>
<dbReference type="EC" id="6.1.1.17" evidence="1"/>
<dbReference type="EMBL" id="AE015451">
    <property type="protein sequence ID" value="AAN67592.1"/>
    <property type="molecule type" value="Genomic_DNA"/>
</dbReference>
<dbReference type="RefSeq" id="NP_744128.1">
    <property type="nucleotide sequence ID" value="NC_002947.4"/>
</dbReference>
<dbReference type="RefSeq" id="WP_010952995.1">
    <property type="nucleotide sequence ID" value="NZ_CP169744.1"/>
</dbReference>
<dbReference type="SMR" id="Q88LF6"/>
<dbReference type="STRING" id="160488.PP_1977"/>
<dbReference type="PaxDb" id="160488-PP_1977"/>
<dbReference type="GeneID" id="83681524"/>
<dbReference type="KEGG" id="ppu:PP_1977"/>
<dbReference type="PATRIC" id="fig|160488.4.peg.2085"/>
<dbReference type="eggNOG" id="COG0008">
    <property type="taxonomic scope" value="Bacteria"/>
</dbReference>
<dbReference type="HOGENOM" id="CLU_015768_6_3_6"/>
<dbReference type="OrthoDB" id="9807503at2"/>
<dbReference type="PhylomeDB" id="Q88LF6"/>
<dbReference type="BioCyc" id="PPUT160488:G1G01-2102-MONOMER"/>
<dbReference type="Proteomes" id="UP000000556">
    <property type="component" value="Chromosome"/>
</dbReference>
<dbReference type="GO" id="GO:0005829">
    <property type="term" value="C:cytosol"/>
    <property type="evidence" value="ECO:0007669"/>
    <property type="project" value="TreeGrafter"/>
</dbReference>
<dbReference type="GO" id="GO:0005524">
    <property type="term" value="F:ATP binding"/>
    <property type="evidence" value="ECO:0007669"/>
    <property type="project" value="UniProtKB-UniRule"/>
</dbReference>
<dbReference type="GO" id="GO:0004818">
    <property type="term" value="F:glutamate-tRNA ligase activity"/>
    <property type="evidence" value="ECO:0007669"/>
    <property type="project" value="UniProtKB-UniRule"/>
</dbReference>
<dbReference type="GO" id="GO:0000049">
    <property type="term" value="F:tRNA binding"/>
    <property type="evidence" value="ECO:0007669"/>
    <property type="project" value="InterPro"/>
</dbReference>
<dbReference type="GO" id="GO:0008270">
    <property type="term" value="F:zinc ion binding"/>
    <property type="evidence" value="ECO:0007669"/>
    <property type="project" value="InterPro"/>
</dbReference>
<dbReference type="GO" id="GO:0006424">
    <property type="term" value="P:glutamyl-tRNA aminoacylation"/>
    <property type="evidence" value="ECO:0007669"/>
    <property type="project" value="UniProtKB-UniRule"/>
</dbReference>
<dbReference type="CDD" id="cd00808">
    <property type="entry name" value="GluRS_core"/>
    <property type="match status" value="1"/>
</dbReference>
<dbReference type="FunFam" id="1.10.10.350:FF:000007">
    <property type="entry name" value="Glutamate--tRNA ligase"/>
    <property type="match status" value="1"/>
</dbReference>
<dbReference type="FunFam" id="3.40.50.620:FF:000045">
    <property type="entry name" value="Glutamate--tRNA ligase, mitochondrial"/>
    <property type="match status" value="1"/>
</dbReference>
<dbReference type="Gene3D" id="1.10.10.350">
    <property type="match status" value="1"/>
</dbReference>
<dbReference type="Gene3D" id="3.40.50.620">
    <property type="entry name" value="HUPs"/>
    <property type="match status" value="1"/>
</dbReference>
<dbReference type="HAMAP" id="MF_00022">
    <property type="entry name" value="Glu_tRNA_synth_type1"/>
    <property type="match status" value="1"/>
</dbReference>
<dbReference type="InterPro" id="IPR045462">
    <property type="entry name" value="aa-tRNA-synth_I_cd-bd"/>
</dbReference>
<dbReference type="InterPro" id="IPR020751">
    <property type="entry name" value="aa-tRNA-synth_I_codon-bd_sub2"/>
</dbReference>
<dbReference type="InterPro" id="IPR001412">
    <property type="entry name" value="aa-tRNA-synth_I_CS"/>
</dbReference>
<dbReference type="InterPro" id="IPR008925">
    <property type="entry name" value="aa_tRNA-synth_I_cd-bd_sf"/>
</dbReference>
<dbReference type="InterPro" id="IPR004527">
    <property type="entry name" value="Glu-tRNA-ligase_bac/mito"/>
</dbReference>
<dbReference type="InterPro" id="IPR000924">
    <property type="entry name" value="Glu/Gln-tRNA-synth"/>
</dbReference>
<dbReference type="InterPro" id="IPR020058">
    <property type="entry name" value="Glu/Gln-tRNA-synth_Ib_cat-dom"/>
</dbReference>
<dbReference type="InterPro" id="IPR049940">
    <property type="entry name" value="GluQ/Sye"/>
</dbReference>
<dbReference type="InterPro" id="IPR033910">
    <property type="entry name" value="GluRS_core"/>
</dbReference>
<dbReference type="InterPro" id="IPR014729">
    <property type="entry name" value="Rossmann-like_a/b/a_fold"/>
</dbReference>
<dbReference type="NCBIfam" id="TIGR00464">
    <property type="entry name" value="gltX_bact"/>
    <property type="match status" value="1"/>
</dbReference>
<dbReference type="PANTHER" id="PTHR43311">
    <property type="entry name" value="GLUTAMATE--TRNA LIGASE"/>
    <property type="match status" value="1"/>
</dbReference>
<dbReference type="PANTHER" id="PTHR43311:SF2">
    <property type="entry name" value="GLUTAMATE--TRNA LIGASE, MITOCHONDRIAL-RELATED"/>
    <property type="match status" value="1"/>
</dbReference>
<dbReference type="Pfam" id="PF19269">
    <property type="entry name" value="Anticodon_2"/>
    <property type="match status" value="1"/>
</dbReference>
<dbReference type="Pfam" id="PF00749">
    <property type="entry name" value="tRNA-synt_1c"/>
    <property type="match status" value="1"/>
</dbReference>
<dbReference type="PRINTS" id="PR00987">
    <property type="entry name" value="TRNASYNTHGLU"/>
</dbReference>
<dbReference type="SUPFAM" id="SSF48163">
    <property type="entry name" value="An anticodon-binding domain of class I aminoacyl-tRNA synthetases"/>
    <property type="match status" value="1"/>
</dbReference>
<dbReference type="SUPFAM" id="SSF52374">
    <property type="entry name" value="Nucleotidylyl transferase"/>
    <property type="match status" value="1"/>
</dbReference>
<dbReference type="PROSITE" id="PS00178">
    <property type="entry name" value="AA_TRNA_LIGASE_I"/>
    <property type="match status" value="1"/>
</dbReference>
<accession>Q88LF6</accession>
<reference key="1">
    <citation type="journal article" date="2002" name="Environ. Microbiol.">
        <title>Complete genome sequence and comparative analysis of the metabolically versatile Pseudomonas putida KT2440.</title>
        <authorList>
            <person name="Nelson K.E."/>
            <person name="Weinel C."/>
            <person name="Paulsen I.T."/>
            <person name="Dodson R.J."/>
            <person name="Hilbert H."/>
            <person name="Martins dos Santos V.A.P."/>
            <person name="Fouts D.E."/>
            <person name="Gill S.R."/>
            <person name="Pop M."/>
            <person name="Holmes M."/>
            <person name="Brinkac L.M."/>
            <person name="Beanan M.J."/>
            <person name="DeBoy R.T."/>
            <person name="Daugherty S.C."/>
            <person name="Kolonay J.F."/>
            <person name="Madupu R."/>
            <person name="Nelson W.C."/>
            <person name="White O."/>
            <person name="Peterson J.D."/>
            <person name="Khouri H.M."/>
            <person name="Hance I."/>
            <person name="Chris Lee P."/>
            <person name="Holtzapple E.K."/>
            <person name="Scanlan D."/>
            <person name="Tran K."/>
            <person name="Moazzez A."/>
            <person name="Utterback T.R."/>
            <person name="Rizzo M."/>
            <person name="Lee K."/>
            <person name="Kosack D."/>
            <person name="Moestl D."/>
            <person name="Wedler H."/>
            <person name="Lauber J."/>
            <person name="Stjepandic D."/>
            <person name="Hoheisel J."/>
            <person name="Straetz M."/>
            <person name="Heim S."/>
            <person name="Kiewitz C."/>
            <person name="Eisen J.A."/>
            <person name="Timmis K.N."/>
            <person name="Duesterhoeft A."/>
            <person name="Tuemmler B."/>
            <person name="Fraser C.M."/>
        </authorList>
    </citation>
    <scope>NUCLEOTIDE SEQUENCE [LARGE SCALE GENOMIC DNA]</scope>
    <source>
        <strain>ATCC 47054 / DSM 6125 / CFBP 8728 / NCIMB 11950 / KT2440</strain>
    </source>
</reference>
<organism>
    <name type="scientific">Pseudomonas putida (strain ATCC 47054 / DSM 6125 / CFBP 8728 / NCIMB 11950 / KT2440)</name>
    <dbReference type="NCBI Taxonomy" id="160488"/>
    <lineage>
        <taxon>Bacteria</taxon>
        <taxon>Pseudomonadati</taxon>
        <taxon>Pseudomonadota</taxon>
        <taxon>Gammaproteobacteria</taxon>
        <taxon>Pseudomonadales</taxon>
        <taxon>Pseudomonadaceae</taxon>
        <taxon>Pseudomonas</taxon>
    </lineage>
</organism>
<evidence type="ECO:0000255" key="1">
    <source>
        <dbReference type="HAMAP-Rule" id="MF_00022"/>
    </source>
</evidence>
<keyword id="KW-0030">Aminoacyl-tRNA synthetase</keyword>
<keyword id="KW-0067">ATP-binding</keyword>
<keyword id="KW-0963">Cytoplasm</keyword>
<keyword id="KW-0436">Ligase</keyword>
<keyword id="KW-0547">Nucleotide-binding</keyword>
<keyword id="KW-0648">Protein biosynthesis</keyword>
<keyword id="KW-1185">Reference proteome</keyword>
<name>SYE_PSEPK</name>
<comment type="function">
    <text evidence="1">Catalyzes the attachment of glutamate to tRNA(Glu) in a two-step reaction: glutamate is first activated by ATP to form Glu-AMP and then transferred to the acceptor end of tRNA(Glu).</text>
</comment>
<comment type="catalytic activity">
    <reaction evidence="1">
        <text>tRNA(Glu) + L-glutamate + ATP = L-glutamyl-tRNA(Glu) + AMP + diphosphate</text>
        <dbReference type="Rhea" id="RHEA:23540"/>
        <dbReference type="Rhea" id="RHEA-COMP:9663"/>
        <dbReference type="Rhea" id="RHEA-COMP:9680"/>
        <dbReference type="ChEBI" id="CHEBI:29985"/>
        <dbReference type="ChEBI" id="CHEBI:30616"/>
        <dbReference type="ChEBI" id="CHEBI:33019"/>
        <dbReference type="ChEBI" id="CHEBI:78442"/>
        <dbReference type="ChEBI" id="CHEBI:78520"/>
        <dbReference type="ChEBI" id="CHEBI:456215"/>
        <dbReference type="EC" id="6.1.1.17"/>
    </reaction>
</comment>
<comment type="subunit">
    <text evidence="1">Monomer.</text>
</comment>
<comment type="subcellular location">
    <subcellularLocation>
        <location evidence="1">Cytoplasm</location>
    </subcellularLocation>
</comment>
<comment type="similarity">
    <text evidence="1">Belongs to the class-I aminoacyl-tRNA synthetase family. Glutamate--tRNA ligase type 1 subfamily.</text>
</comment>
<gene>
    <name evidence="1" type="primary">gltX</name>
    <name type="ordered locus">PP_1977</name>
</gene>
<feature type="chain" id="PRO_0000119628" description="Glutamate--tRNA ligase">
    <location>
        <begin position="1"/>
        <end position="493"/>
    </location>
</feature>
<feature type="short sequence motif" description="'HIGH' region" evidence="1">
    <location>
        <begin position="10"/>
        <end position="20"/>
    </location>
</feature>
<feature type="short sequence motif" description="'KMSKS' region" evidence="1">
    <location>
        <begin position="251"/>
        <end position="255"/>
    </location>
</feature>
<feature type="binding site" evidence="1">
    <location>
        <position position="254"/>
    </location>
    <ligand>
        <name>ATP</name>
        <dbReference type="ChEBI" id="CHEBI:30616"/>
    </ligand>
</feature>
<protein>
    <recommendedName>
        <fullName evidence="1">Glutamate--tRNA ligase</fullName>
        <ecNumber evidence="1">6.1.1.17</ecNumber>
    </recommendedName>
    <alternativeName>
        <fullName evidence="1">Glutamyl-tRNA synthetase</fullName>
        <shortName evidence="1">GluRS</shortName>
    </alternativeName>
</protein>
<sequence>MTTVRTRIAPSPTGDPHVGTAYIALFNYCFAKQHGGEFILRIEDTDQLRSTRESEQQIFDALRWLGIEWNEGPDVGGPHGPYRQSERGEIYAKYAKELVDAGHAFYCFCTAEELEQMRAEQQARGETPRYDGRALLMSAEEVQRRLDAGEPHVIRMKVPSEGICVVPDMLRGDVEIPWDRMDMQVLMKNDGLPTYFLANVVDDHLMGITHVLRGEEWLPSAPKLIKLYEYFGWEQPKLCYMPLLRNPDKSKLSKRKNPTSVTFYERMGFMPEAMLNYLGRMGWSMPDEREKFSLAEMVEHFDLSRISLGGPIFDIEKLSWLNGQWLRELPVEEFAARLQKWAFNSDYMMKIAPHVQGRVETFSQVAPLGGFFFEGALKLDAKLFESKKLSADQVRQVIQLILWKLESLRQWEKERITGCIQAVVEALELKLRDAMPLMFAAITGQASSVSVLDAMEILGPDLTRYRLRQALDLLGGVSKKENKEWEKLLASIA</sequence>